<sequence>MSTFSLKIIRVGITVLVVVLAVIAIFNVWAFYTESPWTRDAKFTADVVAIAPDVSGLLTEVPVKDNQLVQKGQILFVIDQPRYQQALAEAEADVAYYQTLAAEKQRESSRRHRLGIQALSQEEIDQASNVLQTVQHQLAKAIAVRDLARLDLERTTVRAPAEGWVTNLNVHAGEFINRGATAVALVKKDTFYILAYLEETKLEGVKPGYRAEITPLGSNRILHGTVDSISAGVTNSSSSADSKGLATIDNNLEWVRLAQRVPVKIHLDSEDQQYLYPAGTTATVVITGPNDRDPHQASPMTKLMHRLREFG</sequence>
<comment type="function">
    <text evidence="1">Forms an efflux pump with AaeB.</text>
</comment>
<comment type="subcellular location">
    <subcellularLocation>
        <location evidence="1">Cell inner membrane</location>
        <topology evidence="1">Single-pass membrane protein</topology>
    </subcellularLocation>
</comment>
<comment type="similarity">
    <text evidence="1">Belongs to the membrane fusion protein (MFP) (TC 8.A.1) family.</text>
</comment>
<gene>
    <name evidence="1" type="primary">aaeA</name>
    <name type="ordered locus">YPN_3487</name>
    <name type="ORF">YP516_3960</name>
</gene>
<feature type="chain" id="PRO_0000300560" description="p-hydroxybenzoic acid efflux pump subunit AaeA">
    <location>
        <begin position="1"/>
        <end position="311"/>
    </location>
</feature>
<feature type="transmembrane region" description="Helical" evidence="1">
    <location>
        <begin position="11"/>
        <end position="31"/>
    </location>
</feature>
<proteinExistence type="inferred from homology"/>
<organism>
    <name type="scientific">Yersinia pestis bv. Antiqua (strain Nepal516)</name>
    <dbReference type="NCBI Taxonomy" id="377628"/>
    <lineage>
        <taxon>Bacteria</taxon>
        <taxon>Pseudomonadati</taxon>
        <taxon>Pseudomonadota</taxon>
        <taxon>Gammaproteobacteria</taxon>
        <taxon>Enterobacterales</taxon>
        <taxon>Yersiniaceae</taxon>
        <taxon>Yersinia</taxon>
    </lineage>
</organism>
<name>AAEA_YERPN</name>
<accession>Q1CDW6</accession>
<accession>D1Q1G1</accession>
<keyword id="KW-0997">Cell inner membrane</keyword>
<keyword id="KW-1003">Cell membrane</keyword>
<keyword id="KW-0472">Membrane</keyword>
<keyword id="KW-0812">Transmembrane</keyword>
<keyword id="KW-1133">Transmembrane helix</keyword>
<keyword id="KW-0813">Transport</keyword>
<reference key="1">
    <citation type="journal article" date="2006" name="J. Bacteriol.">
        <title>Complete genome sequence of Yersinia pestis strains Antiqua and Nepal516: evidence of gene reduction in an emerging pathogen.</title>
        <authorList>
            <person name="Chain P.S.G."/>
            <person name="Hu P."/>
            <person name="Malfatti S.A."/>
            <person name="Radnedge L."/>
            <person name="Larimer F."/>
            <person name="Vergez L.M."/>
            <person name="Worsham P."/>
            <person name="Chu M.C."/>
            <person name="Andersen G.L."/>
        </authorList>
    </citation>
    <scope>NUCLEOTIDE SEQUENCE [LARGE SCALE GENOMIC DNA]</scope>
    <source>
        <strain>Nepal516</strain>
    </source>
</reference>
<reference key="2">
    <citation type="submission" date="2009-04" db="EMBL/GenBank/DDBJ databases">
        <title>Yersinia pestis Nepal516A whole genome shotgun sequencing project.</title>
        <authorList>
            <person name="Plunkett G. III"/>
            <person name="Anderson B.D."/>
            <person name="Baumler D.J."/>
            <person name="Burland V."/>
            <person name="Cabot E.L."/>
            <person name="Glasner J.D."/>
            <person name="Mau B."/>
            <person name="Neeno-Eckwall E."/>
            <person name="Perna N.T."/>
            <person name="Munk A.C."/>
            <person name="Tapia R."/>
            <person name="Green L.D."/>
            <person name="Rogers Y.C."/>
            <person name="Detter J.C."/>
            <person name="Bruce D.C."/>
            <person name="Brettin T.S."/>
        </authorList>
    </citation>
    <scope>NUCLEOTIDE SEQUENCE [LARGE SCALE GENOMIC DNA]</scope>
    <source>
        <strain>Nepal516</strain>
    </source>
</reference>
<dbReference type="EMBL" id="CP000305">
    <property type="protein sequence ID" value="ABG19814.1"/>
    <property type="molecule type" value="Genomic_DNA"/>
</dbReference>
<dbReference type="EMBL" id="ACNQ01000019">
    <property type="protein sequence ID" value="EEO74364.1"/>
    <property type="molecule type" value="Genomic_DNA"/>
</dbReference>
<dbReference type="RefSeq" id="WP_002210094.1">
    <property type="nucleotide sequence ID" value="NZ_ACNQ01000019.1"/>
</dbReference>
<dbReference type="SMR" id="Q1CDW6"/>
<dbReference type="GeneID" id="57975110"/>
<dbReference type="KEGG" id="ypn:YPN_3487"/>
<dbReference type="HOGENOM" id="CLU_018816_15_2_6"/>
<dbReference type="Proteomes" id="UP000008936">
    <property type="component" value="Chromosome"/>
</dbReference>
<dbReference type="GO" id="GO:0005886">
    <property type="term" value="C:plasma membrane"/>
    <property type="evidence" value="ECO:0007669"/>
    <property type="project" value="UniProtKB-SubCell"/>
</dbReference>
<dbReference type="GO" id="GO:0022857">
    <property type="term" value="F:transmembrane transporter activity"/>
    <property type="evidence" value="ECO:0007669"/>
    <property type="project" value="UniProtKB-UniRule"/>
</dbReference>
<dbReference type="Gene3D" id="2.40.30.170">
    <property type="match status" value="1"/>
</dbReference>
<dbReference type="Gene3D" id="2.40.50.100">
    <property type="match status" value="1"/>
</dbReference>
<dbReference type="HAMAP" id="MF_01544">
    <property type="entry name" value="AaeA"/>
    <property type="match status" value="1"/>
</dbReference>
<dbReference type="InterPro" id="IPR043602">
    <property type="entry name" value="CusB-like_dom_1"/>
</dbReference>
<dbReference type="InterPro" id="IPR032317">
    <property type="entry name" value="CusB_D23"/>
</dbReference>
<dbReference type="InterPro" id="IPR050393">
    <property type="entry name" value="MFP_Efflux_Pump"/>
</dbReference>
<dbReference type="InterPro" id="IPR022871">
    <property type="entry name" value="PHBA_efflux_pump_AaeA"/>
</dbReference>
<dbReference type="InterPro" id="IPR006143">
    <property type="entry name" value="RND_pump_MFP"/>
</dbReference>
<dbReference type="NCBIfam" id="NF007850">
    <property type="entry name" value="PRK10559.1"/>
    <property type="match status" value="1"/>
</dbReference>
<dbReference type="NCBIfam" id="TIGR01730">
    <property type="entry name" value="RND_mfp"/>
    <property type="match status" value="1"/>
</dbReference>
<dbReference type="PANTHER" id="PTHR30367:SF12">
    <property type="entry name" value="P-HYDROXYBENZOIC ACID EFFLUX PUMP SUBUNIT AAEA"/>
    <property type="match status" value="1"/>
</dbReference>
<dbReference type="PANTHER" id="PTHR30367">
    <property type="entry name" value="P-HYDROXYBENZOIC ACID EFFLUX PUMP SUBUNIT AAEA-RELATED"/>
    <property type="match status" value="1"/>
</dbReference>
<dbReference type="Pfam" id="PF00529">
    <property type="entry name" value="CusB_dom_1"/>
    <property type="match status" value="1"/>
</dbReference>
<dbReference type="Pfam" id="PF16576">
    <property type="entry name" value="HlyD_D23"/>
    <property type="match status" value="1"/>
</dbReference>
<dbReference type="SUPFAM" id="SSF111369">
    <property type="entry name" value="HlyD-like secretion proteins"/>
    <property type="match status" value="1"/>
</dbReference>
<evidence type="ECO:0000255" key="1">
    <source>
        <dbReference type="HAMAP-Rule" id="MF_01544"/>
    </source>
</evidence>
<protein>
    <recommendedName>
        <fullName evidence="1">p-hydroxybenzoic acid efflux pump subunit AaeA</fullName>
        <shortName evidence="1">pHBA efflux pump protein A</shortName>
    </recommendedName>
</protein>